<organism>
    <name type="scientific">Calcarisporium arbuscula</name>
    <name type="common">Dendryphion arbuscula</name>
    <dbReference type="NCBI Taxonomy" id="240499"/>
    <lineage>
        <taxon>Eukaryota</taxon>
        <taxon>Fungi</taxon>
        <taxon>Dikarya</taxon>
        <taxon>Ascomycota</taxon>
        <taxon>Pezizomycotina</taxon>
        <taxon>Sordariomycetes</taxon>
        <taxon>Hypocreomycetidae</taxon>
        <taxon>Hypocreales</taxon>
        <taxon>Hypocreales incertae sedis</taxon>
        <taxon>Calcarisporium</taxon>
    </lineage>
</organism>
<evidence type="ECO:0000255" key="1"/>
<evidence type="ECO:0000255" key="2">
    <source>
        <dbReference type="PROSITE-ProRule" id="PRU00498"/>
    </source>
</evidence>
<evidence type="ECO:0000256" key="3">
    <source>
        <dbReference type="SAM" id="MobiDB-lite"/>
    </source>
</evidence>
<evidence type="ECO:0000269" key="4">
    <source>
    </source>
</evidence>
<evidence type="ECO:0000303" key="5">
    <source>
    </source>
</evidence>
<evidence type="ECO:0000305" key="6"/>
<gene>
    <name evidence="5" type="primary">aurG</name>
</gene>
<name>AURG_CALAK</name>
<feature type="chain" id="PRO_0000443971" description="Acetyltransferase aurG">
    <location>
        <begin position="1"/>
        <end position="410"/>
    </location>
</feature>
<feature type="transmembrane region" description="Helical" evidence="1">
    <location>
        <begin position="3"/>
        <end position="23"/>
    </location>
</feature>
<feature type="transmembrane region" description="Helical" evidence="1">
    <location>
        <begin position="28"/>
        <end position="48"/>
    </location>
</feature>
<feature type="transmembrane region" description="Helical" evidence="1">
    <location>
        <begin position="59"/>
        <end position="79"/>
    </location>
</feature>
<feature type="transmembrane region" description="Helical" evidence="1">
    <location>
        <begin position="157"/>
        <end position="177"/>
    </location>
</feature>
<feature type="transmembrane region" description="Helical" evidence="1">
    <location>
        <begin position="219"/>
        <end position="239"/>
    </location>
</feature>
<feature type="transmembrane region" description="Helical" evidence="1">
    <location>
        <begin position="300"/>
        <end position="320"/>
    </location>
</feature>
<feature type="transmembrane region" description="Helical" evidence="1">
    <location>
        <begin position="364"/>
        <end position="384"/>
    </location>
</feature>
<feature type="region of interest" description="Disordered" evidence="3">
    <location>
        <begin position="90"/>
        <end position="112"/>
    </location>
</feature>
<feature type="compositionally biased region" description="Polar residues" evidence="3">
    <location>
        <begin position="90"/>
        <end position="99"/>
    </location>
</feature>
<feature type="glycosylation site" description="N-linked (GlcNAc...) asparagine" evidence="2">
    <location>
        <position position="98"/>
    </location>
</feature>
<dbReference type="EC" id="2.3.1.-" evidence="4"/>
<dbReference type="EMBL" id="KT581580">
    <property type="protein sequence ID" value="ALD83633.1"/>
    <property type="molecule type" value="Genomic_DNA"/>
</dbReference>
<dbReference type="GlyCosmos" id="A0A0M3STV6">
    <property type="glycosylation" value="1 site, No reported glycans"/>
</dbReference>
<dbReference type="GO" id="GO:0016020">
    <property type="term" value="C:membrane"/>
    <property type="evidence" value="ECO:0007669"/>
    <property type="project" value="UniProtKB-SubCell"/>
</dbReference>
<dbReference type="GO" id="GO:0008374">
    <property type="term" value="F:O-acyltransferase activity"/>
    <property type="evidence" value="ECO:0007669"/>
    <property type="project" value="InterPro"/>
</dbReference>
<dbReference type="GO" id="GO:0006629">
    <property type="term" value="P:lipid metabolic process"/>
    <property type="evidence" value="ECO:0007669"/>
    <property type="project" value="InterPro"/>
</dbReference>
<dbReference type="InterPro" id="IPR044851">
    <property type="entry name" value="Wax_synthase"/>
</dbReference>
<dbReference type="InterPro" id="IPR032805">
    <property type="entry name" value="Wax_synthase_dom"/>
</dbReference>
<dbReference type="PANTHER" id="PTHR31595">
    <property type="entry name" value="LONG-CHAIN-ALCOHOL O-FATTY-ACYLTRANSFERASE 3-RELATED"/>
    <property type="match status" value="1"/>
</dbReference>
<dbReference type="PANTHER" id="PTHR31595:SF27">
    <property type="entry name" value="WAX SYNTHASE DOMAIN-CONTAINING PROTEIN-RELATED"/>
    <property type="match status" value="1"/>
</dbReference>
<dbReference type="Pfam" id="PF13813">
    <property type="entry name" value="MBOAT_2"/>
    <property type="match status" value="1"/>
</dbReference>
<sequence length="410" mass="45987">MGLWLVLANQVGLVGTLVLVVCFTPANSLVRPLLLPGITALVSYGLILNKEAIANAGAWSLVNLNTAGLFLQYLDVGLISRWTYSAYGPTSSRGGQPNASLDLAGRKKPPSSSLLSRLQWGFSTATSWRAPSTVWEAKGTPHFEELPSRGRFLARNAMTLLWSVLVLDVMGLVGGDLDPVANAAHFTWDRVRFLARLGDVSRDEVILRATVVYMRWGAMYFSLQVVYSFLAIVFVMVGLSPVQRWPPLFGSFTEIYTLRNTWGKAWHQLIRQKVSSPAHYTTYSLLGLRKGGIAGRYTCILATFFVSGLLHLFCAEYSYGIQWDQSGTLRFYSIQALGIAMEDAVQATSRRLFAYRSTYWTRAIGYVWVLLWFLWTSPAYFFPLLKYDTEKRPPVLLGPIETWLQSRHVQ</sequence>
<comment type="function">
    <text evidence="4">Acetyltransferase; part of the gene cluster that mediates the biosynthesis of aurovertins, fungal polyketides that exhibit potent inhibition of adenosine triphosphate synthase (PubMed:26340065). Tha biosynthesis starts with the HR-PKS aurA that selects propionate as the starter unit; synthesizes a hexa-ene chain through the repeated functions of the KR and DH domains in the first six iterations; selectively introduces three alpha-methyl substitutions at C4, C6, and C16 using the S-adensylmethionine-dependent cMET; and shuts off KR and DH in the last three iterations to afford a 1,3,5-triketo portion that can undergo intramolecular cyclization to yield the alpha-pyrone intermediate (PubMed:26340065). AurE may act as a cyclase and enhances the rate of pyrone formation and product release of aurA (PubMed:26340065). The methyltransferase aurB then methylates the C17 hydroxyl group (PubMed:26340065). C17 methylation is required to initiate epoxidation by the downstream monooxygenase aurC (PubMed:26340065). The monooxygenase aurC and the epoxide hydrolase aurD can iteratively transform the terminal triene portion of the methylated precursor into the dioxabicyclo[3.2.1]octane scaffold of aurovertin E. Epoxidation modifications of the precursor occur in two separate steps; bis-epoxidation of the two terminal olefins takes place first, followed by another epoxidation that occurs at C7-C8 after tetrahydrofuran formation (PubMed:26340065). The O-acyltransferase aurG converts aurovertin E to aurovertin A (PubMed:26340065).</text>
</comment>
<comment type="pathway">
    <text evidence="4">Polyketide biosynthesis.</text>
</comment>
<comment type="subcellular location">
    <subcellularLocation>
        <location evidence="1">Membrane</location>
        <topology evidence="1">Multi-pass membrane protein</topology>
    </subcellularLocation>
</comment>
<comment type="disruption phenotype">
    <text evidence="4">Accumulates autovertin E but does not produce its acetylated form aurovertin A (PubMed:26340065).</text>
</comment>
<comment type="similarity">
    <text evidence="6">Belongs to the wax synthase family.</text>
</comment>
<reference key="1">
    <citation type="journal article" date="2015" name="J. Am. Chem. Soc.">
        <title>Efficient biosynthesis of fungal polyketides containing the dioxabicyclo-octane ring system.</title>
        <authorList>
            <person name="Mao X.M."/>
            <person name="Zhan Z.J."/>
            <person name="Grayson M.N."/>
            <person name="Tang M.C."/>
            <person name="Xu W."/>
            <person name="Li Y.Q."/>
            <person name="Yin W.B."/>
            <person name="Lin H.C."/>
            <person name="Chooi Y.H."/>
            <person name="Houk K.N."/>
            <person name="Tang Y."/>
        </authorList>
    </citation>
    <scope>NUCLEOTIDE SEQUENCE [GENOMIC DNA]</scope>
    <scope>FUNCTION</scope>
    <scope>DISRUPTION PHENOTYPE</scope>
</reference>
<proteinExistence type="inferred from homology"/>
<keyword id="KW-0012">Acyltransferase</keyword>
<keyword id="KW-0325">Glycoprotein</keyword>
<keyword id="KW-0472">Membrane</keyword>
<keyword id="KW-0808">Transferase</keyword>
<keyword id="KW-0812">Transmembrane</keyword>
<keyword id="KW-1133">Transmembrane helix</keyword>
<accession>A0A0M3STV6</accession>
<protein>
    <recommendedName>
        <fullName evidence="5">Acetyltransferase aurG</fullName>
        <ecNumber evidence="4">2.3.1.-</ecNumber>
    </recommendedName>
    <alternativeName>
        <fullName evidence="5">Aurovertin biosynthesis cluster protein G</fullName>
    </alternativeName>
</protein>